<accession>Q5LXV0</accession>
<evidence type="ECO:0000255" key="1">
    <source>
        <dbReference type="HAMAP-Rule" id="MF_00435"/>
    </source>
</evidence>
<evidence type="ECO:0000255" key="2">
    <source>
        <dbReference type="PROSITE-ProRule" id="PRU01197"/>
    </source>
</evidence>
<evidence type="ECO:0000255" key="3">
    <source>
        <dbReference type="PROSITE-ProRule" id="PRU01198"/>
    </source>
</evidence>
<sequence length="340" mass="37401">MAVQMEYEKDVKVPALDGKKIAVIGYGSQGHAHSQNLRDTGHDVIIGVRPGKSFDKAKEDGFDTYTVAEATKLADVIMILAPDEIQQELYEAEIAPNLEAGNAVGFAHGFNIHFEFIKVPADVDVFMCAPKGPGHLVRRTFEEGFGVPALYAVYQDATGNAKDIAMDWCKGIGAARVGLLETTYKEETEEDLFGEQAVLCGGLTALIETGFEVLTEAGYAPELAYFEVLHEMKLIVDLIYEGGFKKMRQSISNTAEFGDYVSGPRVITEQVKENMKAVLTDIQNGKFANDFVNDYKAGRPKLTAYREEAANLEIEKVGAELRKAMPFVGQNDDDAFKIYN</sequence>
<name>ILVC_STRT1</name>
<comment type="function">
    <text evidence="1">Involved in the biosynthesis of branched-chain amino acids (BCAA). Catalyzes an alkyl-migration followed by a ketol-acid reduction of (S)-2-acetolactate (S2AL) to yield (R)-2,3-dihydroxy-isovalerate. In the isomerase reaction, S2AL is rearranged via a Mg-dependent methyl migration to produce 3-hydroxy-3-methyl-2-ketobutyrate (HMKB). In the reductase reaction, this 2-ketoacid undergoes a metal-dependent reduction by NADPH to yield (R)-2,3-dihydroxy-isovalerate.</text>
</comment>
<comment type="catalytic activity">
    <reaction evidence="1">
        <text>(2R)-2,3-dihydroxy-3-methylbutanoate + NADP(+) = (2S)-2-acetolactate + NADPH + H(+)</text>
        <dbReference type="Rhea" id="RHEA:22068"/>
        <dbReference type="ChEBI" id="CHEBI:15378"/>
        <dbReference type="ChEBI" id="CHEBI:49072"/>
        <dbReference type="ChEBI" id="CHEBI:57783"/>
        <dbReference type="ChEBI" id="CHEBI:58349"/>
        <dbReference type="ChEBI" id="CHEBI:58476"/>
        <dbReference type="EC" id="1.1.1.86"/>
    </reaction>
</comment>
<comment type="catalytic activity">
    <reaction evidence="1">
        <text>(2R,3R)-2,3-dihydroxy-3-methylpentanoate + NADP(+) = (S)-2-ethyl-2-hydroxy-3-oxobutanoate + NADPH + H(+)</text>
        <dbReference type="Rhea" id="RHEA:13493"/>
        <dbReference type="ChEBI" id="CHEBI:15378"/>
        <dbReference type="ChEBI" id="CHEBI:49256"/>
        <dbReference type="ChEBI" id="CHEBI:49258"/>
        <dbReference type="ChEBI" id="CHEBI:57783"/>
        <dbReference type="ChEBI" id="CHEBI:58349"/>
        <dbReference type="EC" id="1.1.1.86"/>
    </reaction>
</comment>
<comment type="cofactor">
    <cofactor evidence="1">
        <name>Mg(2+)</name>
        <dbReference type="ChEBI" id="CHEBI:18420"/>
    </cofactor>
    <text evidence="1">Binds 2 magnesium ions per subunit.</text>
</comment>
<comment type="pathway">
    <text evidence="1">Amino-acid biosynthesis; L-isoleucine biosynthesis; L-isoleucine from 2-oxobutanoate: step 2/4.</text>
</comment>
<comment type="pathway">
    <text evidence="1">Amino-acid biosynthesis; L-valine biosynthesis; L-valine from pyruvate: step 2/4.</text>
</comment>
<comment type="similarity">
    <text evidence="1">Belongs to the ketol-acid reductoisomerase family.</text>
</comment>
<keyword id="KW-0028">Amino-acid biosynthesis</keyword>
<keyword id="KW-0100">Branched-chain amino acid biosynthesis</keyword>
<keyword id="KW-0460">Magnesium</keyword>
<keyword id="KW-0479">Metal-binding</keyword>
<keyword id="KW-0521">NADP</keyword>
<keyword id="KW-0560">Oxidoreductase</keyword>
<dbReference type="EC" id="1.1.1.86" evidence="1"/>
<dbReference type="EMBL" id="CP000024">
    <property type="protein sequence ID" value="AAV63385.1"/>
    <property type="molecule type" value="Genomic_DNA"/>
</dbReference>
<dbReference type="RefSeq" id="WP_011226634.1">
    <property type="nucleotide sequence ID" value="NC_006449.1"/>
</dbReference>
<dbReference type="SMR" id="Q5LXV0"/>
<dbReference type="GeneID" id="66899603"/>
<dbReference type="KEGG" id="stc:str1871"/>
<dbReference type="HOGENOM" id="CLU_033821_0_1_9"/>
<dbReference type="UniPathway" id="UPA00047">
    <property type="reaction ID" value="UER00056"/>
</dbReference>
<dbReference type="UniPathway" id="UPA00049">
    <property type="reaction ID" value="UER00060"/>
</dbReference>
<dbReference type="GO" id="GO:0005829">
    <property type="term" value="C:cytosol"/>
    <property type="evidence" value="ECO:0007669"/>
    <property type="project" value="TreeGrafter"/>
</dbReference>
<dbReference type="GO" id="GO:0004455">
    <property type="term" value="F:ketol-acid reductoisomerase activity"/>
    <property type="evidence" value="ECO:0007669"/>
    <property type="project" value="UniProtKB-UniRule"/>
</dbReference>
<dbReference type="GO" id="GO:0000287">
    <property type="term" value="F:magnesium ion binding"/>
    <property type="evidence" value="ECO:0007669"/>
    <property type="project" value="UniProtKB-UniRule"/>
</dbReference>
<dbReference type="GO" id="GO:0050661">
    <property type="term" value="F:NADP binding"/>
    <property type="evidence" value="ECO:0007669"/>
    <property type="project" value="InterPro"/>
</dbReference>
<dbReference type="GO" id="GO:0009097">
    <property type="term" value="P:isoleucine biosynthetic process"/>
    <property type="evidence" value="ECO:0007669"/>
    <property type="project" value="UniProtKB-UniRule"/>
</dbReference>
<dbReference type="GO" id="GO:0009099">
    <property type="term" value="P:L-valine biosynthetic process"/>
    <property type="evidence" value="ECO:0007669"/>
    <property type="project" value="UniProtKB-UniRule"/>
</dbReference>
<dbReference type="FunFam" id="3.40.50.720:FF:000023">
    <property type="entry name" value="Ketol-acid reductoisomerase (NADP(+))"/>
    <property type="match status" value="1"/>
</dbReference>
<dbReference type="Gene3D" id="6.10.240.10">
    <property type="match status" value="1"/>
</dbReference>
<dbReference type="Gene3D" id="3.40.50.720">
    <property type="entry name" value="NAD(P)-binding Rossmann-like Domain"/>
    <property type="match status" value="1"/>
</dbReference>
<dbReference type="HAMAP" id="MF_00435">
    <property type="entry name" value="IlvC"/>
    <property type="match status" value="1"/>
</dbReference>
<dbReference type="InterPro" id="IPR008927">
    <property type="entry name" value="6-PGluconate_DH-like_C_sf"/>
</dbReference>
<dbReference type="InterPro" id="IPR013023">
    <property type="entry name" value="KARI"/>
</dbReference>
<dbReference type="InterPro" id="IPR000506">
    <property type="entry name" value="KARI_C"/>
</dbReference>
<dbReference type="InterPro" id="IPR013116">
    <property type="entry name" value="KARI_N"/>
</dbReference>
<dbReference type="InterPro" id="IPR014359">
    <property type="entry name" value="KARI_prok"/>
</dbReference>
<dbReference type="InterPro" id="IPR036291">
    <property type="entry name" value="NAD(P)-bd_dom_sf"/>
</dbReference>
<dbReference type="NCBIfam" id="TIGR00465">
    <property type="entry name" value="ilvC"/>
    <property type="match status" value="1"/>
</dbReference>
<dbReference type="NCBIfam" id="NF004017">
    <property type="entry name" value="PRK05479.1"/>
    <property type="match status" value="1"/>
</dbReference>
<dbReference type="NCBIfam" id="NF009940">
    <property type="entry name" value="PRK13403.1"/>
    <property type="match status" value="1"/>
</dbReference>
<dbReference type="PANTHER" id="PTHR21371">
    <property type="entry name" value="KETOL-ACID REDUCTOISOMERASE, MITOCHONDRIAL"/>
    <property type="match status" value="1"/>
</dbReference>
<dbReference type="PANTHER" id="PTHR21371:SF1">
    <property type="entry name" value="KETOL-ACID REDUCTOISOMERASE, MITOCHONDRIAL"/>
    <property type="match status" value="1"/>
</dbReference>
<dbReference type="Pfam" id="PF01450">
    <property type="entry name" value="KARI_C"/>
    <property type="match status" value="1"/>
</dbReference>
<dbReference type="Pfam" id="PF07991">
    <property type="entry name" value="KARI_N"/>
    <property type="match status" value="1"/>
</dbReference>
<dbReference type="PIRSF" id="PIRSF000116">
    <property type="entry name" value="IlvC_gammaproteo"/>
    <property type="match status" value="1"/>
</dbReference>
<dbReference type="SUPFAM" id="SSF48179">
    <property type="entry name" value="6-phosphogluconate dehydrogenase C-terminal domain-like"/>
    <property type="match status" value="1"/>
</dbReference>
<dbReference type="SUPFAM" id="SSF51735">
    <property type="entry name" value="NAD(P)-binding Rossmann-fold domains"/>
    <property type="match status" value="1"/>
</dbReference>
<dbReference type="PROSITE" id="PS51851">
    <property type="entry name" value="KARI_C"/>
    <property type="match status" value="1"/>
</dbReference>
<dbReference type="PROSITE" id="PS51850">
    <property type="entry name" value="KARI_N"/>
    <property type="match status" value="1"/>
</dbReference>
<gene>
    <name evidence="1" type="primary">ilvC</name>
    <name type="ordered locus">str1871</name>
</gene>
<proteinExistence type="inferred from homology"/>
<feature type="chain" id="PRO_0000226206" description="Ketol-acid reductoisomerase (NADP(+))">
    <location>
        <begin position="1"/>
        <end position="340"/>
    </location>
</feature>
<feature type="domain" description="KARI N-terminal Rossmann" evidence="2">
    <location>
        <begin position="3"/>
        <end position="182"/>
    </location>
</feature>
<feature type="domain" description="KARI C-terminal knotted" evidence="3">
    <location>
        <begin position="183"/>
        <end position="328"/>
    </location>
</feature>
<feature type="active site" evidence="1">
    <location>
        <position position="108"/>
    </location>
</feature>
<feature type="binding site" evidence="1">
    <location>
        <begin position="26"/>
        <end position="29"/>
    </location>
    <ligand>
        <name>NADP(+)</name>
        <dbReference type="ChEBI" id="CHEBI:58349"/>
    </ligand>
</feature>
<feature type="binding site" evidence="1">
    <location>
        <position position="49"/>
    </location>
    <ligand>
        <name>NADP(+)</name>
        <dbReference type="ChEBI" id="CHEBI:58349"/>
    </ligand>
</feature>
<feature type="binding site" evidence="1">
    <location>
        <position position="53"/>
    </location>
    <ligand>
        <name>NADP(+)</name>
        <dbReference type="ChEBI" id="CHEBI:58349"/>
    </ligand>
</feature>
<feature type="binding site" evidence="1">
    <location>
        <begin position="83"/>
        <end position="86"/>
    </location>
    <ligand>
        <name>NADP(+)</name>
        <dbReference type="ChEBI" id="CHEBI:58349"/>
    </ligand>
</feature>
<feature type="binding site" evidence="1">
    <location>
        <position position="134"/>
    </location>
    <ligand>
        <name>NADP(+)</name>
        <dbReference type="ChEBI" id="CHEBI:58349"/>
    </ligand>
</feature>
<feature type="binding site" evidence="1">
    <location>
        <position position="191"/>
    </location>
    <ligand>
        <name>Mg(2+)</name>
        <dbReference type="ChEBI" id="CHEBI:18420"/>
        <label>1</label>
    </ligand>
</feature>
<feature type="binding site" evidence="1">
    <location>
        <position position="191"/>
    </location>
    <ligand>
        <name>Mg(2+)</name>
        <dbReference type="ChEBI" id="CHEBI:18420"/>
        <label>2</label>
    </ligand>
</feature>
<feature type="binding site" evidence="1">
    <location>
        <position position="195"/>
    </location>
    <ligand>
        <name>Mg(2+)</name>
        <dbReference type="ChEBI" id="CHEBI:18420"/>
        <label>1</label>
    </ligand>
</feature>
<feature type="binding site" evidence="1">
    <location>
        <position position="227"/>
    </location>
    <ligand>
        <name>Mg(2+)</name>
        <dbReference type="ChEBI" id="CHEBI:18420"/>
        <label>2</label>
    </ligand>
</feature>
<feature type="binding site" evidence="1">
    <location>
        <position position="231"/>
    </location>
    <ligand>
        <name>Mg(2+)</name>
        <dbReference type="ChEBI" id="CHEBI:18420"/>
        <label>2</label>
    </ligand>
</feature>
<feature type="binding site" evidence="1">
    <location>
        <position position="252"/>
    </location>
    <ligand>
        <name>substrate</name>
    </ligand>
</feature>
<organism>
    <name type="scientific">Streptococcus thermophilus (strain CNRZ 1066)</name>
    <dbReference type="NCBI Taxonomy" id="299768"/>
    <lineage>
        <taxon>Bacteria</taxon>
        <taxon>Bacillati</taxon>
        <taxon>Bacillota</taxon>
        <taxon>Bacilli</taxon>
        <taxon>Lactobacillales</taxon>
        <taxon>Streptococcaceae</taxon>
        <taxon>Streptococcus</taxon>
    </lineage>
</organism>
<reference key="1">
    <citation type="journal article" date="2004" name="Nat. Biotechnol.">
        <title>Complete sequence and comparative genome analysis of the dairy bacterium Streptococcus thermophilus.</title>
        <authorList>
            <person name="Bolotin A."/>
            <person name="Quinquis B."/>
            <person name="Renault P."/>
            <person name="Sorokin A."/>
            <person name="Ehrlich S.D."/>
            <person name="Kulakauskas S."/>
            <person name="Lapidus A."/>
            <person name="Goltsman E."/>
            <person name="Mazur M."/>
            <person name="Pusch G.D."/>
            <person name="Fonstein M."/>
            <person name="Overbeek R."/>
            <person name="Kyprides N."/>
            <person name="Purnelle B."/>
            <person name="Prozzi D."/>
            <person name="Ngui K."/>
            <person name="Masuy D."/>
            <person name="Hancy F."/>
            <person name="Burteau S."/>
            <person name="Boutry M."/>
            <person name="Delcour J."/>
            <person name="Goffeau A."/>
            <person name="Hols P."/>
        </authorList>
    </citation>
    <scope>NUCLEOTIDE SEQUENCE [LARGE SCALE GENOMIC DNA]</scope>
    <source>
        <strain>CNRZ 1066</strain>
    </source>
</reference>
<protein>
    <recommendedName>
        <fullName evidence="1">Ketol-acid reductoisomerase (NADP(+))</fullName>
        <shortName evidence="1">KARI</shortName>
        <ecNumber evidence="1">1.1.1.86</ecNumber>
    </recommendedName>
    <alternativeName>
        <fullName evidence="1">Acetohydroxy-acid isomeroreductase</fullName>
        <shortName evidence="1">AHIR</shortName>
    </alternativeName>
    <alternativeName>
        <fullName evidence="1">Alpha-keto-beta-hydroxylacyl reductoisomerase</fullName>
    </alternativeName>
    <alternativeName>
        <fullName evidence="1">Ketol-acid reductoisomerase type 1</fullName>
    </alternativeName>
    <alternativeName>
        <fullName evidence="1">Ketol-acid reductoisomerase type I</fullName>
    </alternativeName>
</protein>